<feature type="signal peptide" evidence="2">
    <location>
        <begin position="1"/>
        <end position="20"/>
    </location>
</feature>
<feature type="propeptide" id="PRO_0000398311" evidence="10">
    <location>
        <begin position="21"/>
        <end position="36"/>
    </location>
</feature>
<feature type="chain" id="PRO_5000319660" description="N.vectensis toxin 1 3" evidence="11">
    <location>
        <begin position="39"/>
        <end position="85"/>
    </location>
</feature>
<feature type="disulfide bond" evidence="1">
    <location>
        <begin position="42"/>
        <end position="82"/>
    </location>
</feature>
<feature type="disulfide bond" evidence="1">
    <location>
        <begin position="44"/>
        <end position="72"/>
    </location>
</feature>
<feature type="disulfide bond" evidence="1">
    <location>
        <begin position="65"/>
        <end position="83"/>
    </location>
</feature>
<feature type="splice variant" id="VSP_039745" description="In isoform 2." evidence="10">
    <original>RDMMSDDELDFHLSKRGIPCACDSDGPDIRSASLSGIVWMGSCPSGWKKCKSYYSIVADCCNQ</original>
    <variation>K</variation>
    <location>
        <begin position="23"/>
        <end position="85"/>
    </location>
</feature>
<feature type="sequence variant" description="In Nv1-15.">
    <original>S</original>
    <variation>L</variation>
    <location>
        <position position="3"/>
    </location>
</feature>
<feature type="sequence variant" description="In Nv1-17 and in Nv1-18.">
    <original>K</original>
    <variation>N</variation>
    <location>
        <position position="5"/>
    </location>
</feature>
<feature type="sequence variant" description="In Nv1-5, Nv8/Nv19 and Nv1-15.">
    <original>V</original>
    <variation>A</variation>
    <location>
        <position position="9"/>
    </location>
</feature>
<feature type="sequence variant" description="In Nv1-15.">
    <original>L</original>
    <variation>V</variation>
    <location>
        <position position="13"/>
    </location>
</feature>
<feature type="sequence variant" description="In Nv1-2, Nv1-13.">
    <original>C</original>
    <variation>S</variation>
    <location>
        <position position="19"/>
    </location>
</feature>
<feature type="sequence variant" description="In Nv1-13.">
    <original>D</original>
    <variation>T</variation>
    <location>
        <position position="29"/>
    </location>
</feature>
<feature type="sequence variant" description="In Nv1-4, Nv8/Nv19.">
    <original>F</original>
    <variation>Y</variation>
    <location>
        <position position="33"/>
    </location>
</feature>
<feature type="sequence variant" description="In Nv1-18.">
    <original>A</original>
    <variation>V</variation>
    <location>
        <position position="43"/>
    </location>
</feature>
<feature type="sequence variant" description="In Nv1-4.">
    <original>M</original>
    <variation>V</variation>
    <location>
        <position position="62"/>
    </location>
</feature>
<feature type="sequence variant" description="In Nv1-13.">
    <original>I</original>
    <variation>V</variation>
    <location>
        <position position="78"/>
    </location>
</feature>
<proteinExistence type="evidence at protein level"/>
<name>NA228_NEMVE</name>
<gene>
    <name type="ORF">v1g113139</name>
</gene>
<dbReference type="EMBL" id="EU422969">
    <property type="protein sequence ID" value="ACB71118.1"/>
    <property type="molecule type" value="mRNA"/>
</dbReference>
<dbReference type="EMBL" id="EU422970">
    <property type="protein sequence ID" value="ACB71119.1"/>
    <property type="molecule type" value="mRNA"/>
</dbReference>
<dbReference type="EMBL" id="EU422971">
    <property type="protein sequence ID" value="ACB71120.1"/>
    <property type="molecule type" value="mRNA"/>
</dbReference>
<dbReference type="EMBL" id="EU124453">
    <property type="protein sequence ID" value="ABW97332.1"/>
    <property type="molecule type" value="Genomic_DNA"/>
</dbReference>
<dbReference type="EMBL" id="EU124455">
    <property type="protein sequence ID" value="ABW97334.1"/>
    <property type="molecule type" value="Genomic_DNA"/>
</dbReference>
<dbReference type="EMBL" id="EU124456">
    <property type="protein sequence ID" value="ABW97335.1"/>
    <property type="molecule type" value="Genomic_DNA"/>
</dbReference>
<dbReference type="EMBL" id="EU124459">
    <property type="protein sequence ID" value="ABW97338.1"/>
    <property type="molecule type" value="Genomic_DNA"/>
</dbReference>
<dbReference type="EMBL" id="EU124464">
    <property type="protein sequence ID" value="ABW97343.1"/>
    <property type="molecule type" value="Genomic_DNA"/>
</dbReference>
<dbReference type="EMBL" id="EU124466">
    <property type="protein sequence ID" value="ABW97345.1"/>
    <property type="molecule type" value="Genomic_DNA"/>
</dbReference>
<dbReference type="EMBL" id="DS469622">
    <property type="protein sequence ID" value="EDO38670.1"/>
    <property type="status" value="ALT_SEQ"/>
    <property type="molecule type" value="Genomic_DNA"/>
</dbReference>
<dbReference type="RefSeq" id="XP_001630733.1">
    <property type="nucleotide sequence ID" value="XM_001630683.1"/>
</dbReference>
<dbReference type="RefSeq" id="XP_001630735.1">
    <property type="nucleotide sequence ID" value="XM_001630685.1"/>
</dbReference>
<dbReference type="RefSeq" id="XP_001630737.1">
    <property type="nucleotide sequence ID" value="XM_001630687.1"/>
</dbReference>
<dbReference type="RefSeq" id="XP_001630739.1">
    <property type="nucleotide sequence ID" value="XM_001630689.1"/>
</dbReference>
<dbReference type="SMR" id="B1NWR6"/>
<dbReference type="HOGENOM" id="CLU_2944416_0_0_1"/>
<dbReference type="InParanoid" id="B1NWR6"/>
<dbReference type="PhylomeDB" id="B1NWR6"/>
<dbReference type="Proteomes" id="UP000001593">
    <property type="component" value="Unassembled WGS sequence"/>
</dbReference>
<dbReference type="GO" id="GO:0005576">
    <property type="term" value="C:extracellular region"/>
    <property type="evidence" value="ECO:0007669"/>
    <property type="project" value="UniProtKB-SubCell"/>
</dbReference>
<dbReference type="GO" id="GO:0017080">
    <property type="term" value="F:sodium channel regulator activity"/>
    <property type="evidence" value="ECO:0007669"/>
    <property type="project" value="UniProtKB-KW"/>
</dbReference>
<dbReference type="GO" id="GO:0090729">
    <property type="term" value="F:toxin activity"/>
    <property type="evidence" value="ECO:0007669"/>
    <property type="project" value="UniProtKB-KW"/>
</dbReference>
<dbReference type="Gene3D" id="2.20.20.10">
    <property type="entry name" value="Anthopleurin-A"/>
    <property type="match status" value="1"/>
</dbReference>
<dbReference type="InterPro" id="IPR023355">
    <property type="entry name" value="Myo_ane_neurotoxin_sf"/>
</dbReference>
<dbReference type="Pfam" id="PF00706">
    <property type="entry name" value="Toxin_4"/>
    <property type="match status" value="1"/>
</dbReference>
<dbReference type="SUPFAM" id="SSF57392">
    <property type="entry name" value="Defensin-like"/>
    <property type="match status" value="1"/>
</dbReference>
<keyword id="KW-0025">Alternative splicing</keyword>
<keyword id="KW-0165">Cleavage on pair of basic residues</keyword>
<keyword id="KW-1015">Disulfide bond</keyword>
<keyword id="KW-0872">Ion channel impairing toxin</keyword>
<keyword id="KW-0528">Neurotoxin</keyword>
<keyword id="KW-1185">Reference proteome</keyword>
<keyword id="KW-0964">Secreted</keyword>
<keyword id="KW-0732">Signal</keyword>
<keyword id="KW-0800">Toxin</keyword>
<keyword id="KW-0738">Voltage-gated sodium channel impairing toxin</keyword>
<comment type="function">
    <text evidence="3 4 5 6">Binds to site 3 of voltage-gated sodium channels and inhibits the inactivation process (PubMed:18538344). Is highly active on DmNav1/TipE (drosophila) and is only extremely weakly active on rat Nav1.4-beta-1/SCN4A-SCN1B, and on human Nav1.5-beta-1/SCN5A-beta-1 (PubMed:18538344). This reveals high specificity for arthropod over mammalian channels (PubMed:18538344). In vivo, when released into the medium, this recombinant toxin induces impaired swimming, paralysis and death of the crustacean A.nauplii within several hours (PubMed:22048953). Also causes paralysis of cherry shrimps immediately after injection at very low doses (PubMed:29424690). Its effect on zebrafish (D.rerio) larvae is also rapid, since it induces tail twitching accompanied by impaired swimming after 20 minutes and complete paralysis within 45 minutes (PubMed:22048953). It has also been observed to cause death of zebrafish larvae within 1 hour (PubMed:31134275).</text>
</comment>
<comment type="subcellular location">
    <subcellularLocation>
        <location evidence="3">Secreted</location>
    </subcellularLocation>
</comment>
<comment type="alternative products">
    <event type="alternative splicing"/>
    <isoform>
        <id>B1NWR6-1</id>
        <name>1</name>
        <sequence type="displayed"/>
    </isoform>
    <isoform>
        <id>B1NWR6-2</id>
        <name>2</name>
        <name>truncated</name>
        <sequence type="described" ref="VSP_039745"/>
    </isoform>
    <text>Intron retention discovered for all transcripts, no experimental confirmation available for this specific sequence.</text>
</comment>
<comment type="tissue specificity">
    <text evidence="4 5">Expressed in ectodermal glands and in clumps outside of the extodermal layer (PubMed:22048953). Is not expressed in nematocytes (PubMed:22048953). In adult female tissues, shows similar expression levels in mesenteries (gametes-producing tissue), tentacles, pharynx and physa (PubMed:29424690).</text>
</comment>
<comment type="developmental stage">
    <text evidence="3 4 5 6">Is detected in unfertilized eggs (at protein level) (PubMed:29424690, PubMed:31134275). Is also detected in late planulae, primary polyps and adults (both females and males) (at protein level) (PubMed:22048953, PubMed:29424690). Nv1 is transcribed throughout the complete life cycle and is found at multiple developmental stages including unfertilized eggs, blastulae, gastrulae, early planulae, planulae, metamorphosing planulae, primary polyps, juvenile polyps (2 and 4 months old), adult males, and adult females, with highest levels in juvenile polyps and adults (PubMed:18538344, PubMed:29424690). Importantly, Nv1 transcripts are not spliced in the embryo and planula due to intron retention and therefore Nv1 can be considered purely an adult toxin (PubMed:18538344).</text>
</comment>
<comment type="toxic dose">
    <text evidence="3">PD(50) is 76 nmol/kg into blowfly larvae.</text>
</comment>
<comment type="miscellaneous">
    <text>Nv1 toxin seems to be encoded by 8 different genes. 4 of them code for identical precursors, whereas 4 others code for very similar precursors. In the genome draft, 6 additional loci are also correlated to Nv1 toxin, but they are not predicted to be functional genes. This high similarity may be explained by concerted evolution.</text>
</comment>
<comment type="miscellaneous">
    <text evidence="10">The primary structure of the mature peptide is identical in 9 entries (AC B1NWS4, AC B1NWS1, AC B1NWR6, AC P0CH90, AC P0CH46, AC B1NWS8, AC A7SCE5, AC B1NWR7 and AC P0CH45). Additional information can be found in entry AC B1NWS4.</text>
</comment>
<comment type="miscellaneous">
    <molecule>Isoform 2</molecule>
    <text evidence="10">Due to an intron retention observed only in early life stages (embryo and planula).</text>
</comment>
<comment type="miscellaneous">
    <text evidence="3">Negative results: has no activity on the rat brain channel Nav1.2a-beta-1/SCN2A-SCN1B.</text>
</comment>
<comment type="similarity">
    <text evidence="10">Belongs to the sea anemone sodium channel inhibitory toxin family. Type II subfamily.</text>
</comment>
<comment type="caution">
    <text evidence="10">The 8 variants shown here could also be shown in the 3 identical proteins (AC B1NWS4, AC P0CH46 and AC B1NWR7) encoded by the 3 different genes.</text>
</comment>
<comment type="sequence caution" evidence="10">
    <conflict type="erroneous gene model prediction">
        <sequence resource="EMBL-CDS" id="EDO38670"/>
    </conflict>
</comment>
<accession>B1NWR6</accession>
<accession>A7SCE0</accession>
<accession>B1NWR8</accession>
<accession>B1NWR9</accession>
<accession>B1NWS2</accession>
<accession>B1NWS7</accession>
<accession>B1NWS9</accession>
<accession>B5L633</accession>
<accession>B5L634</accession>
<protein>
    <recommendedName>
        <fullName evidence="8">N.vectensis toxin 1 3</fullName>
        <shortName evidence="8">Nv1</shortName>
    </recommendedName>
    <alternativeName>
        <fullName evidence="9">Delta-edwarditoxin-Nvc1c</fullName>
        <shortName evidence="9">Delta-EWTX-Nvc1c</shortName>
    </alternativeName>
    <alternativeName>
        <fullName evidence="9">Delta-edwarditoxin-Nvc1d</fullName>
        <shortName evidence="9">Delta-EWTX-Nvc1d</shortName>
    </alternativeName>
    <alternativeName>
        <fullName evidence="7">Neurotoxin Nv1-116.28.1</fullName>
    </alternativeName>
    <alternativeName>
        <fullName evidence="16">Neurotoxin Nv1-13</fullName>
    </alternativeName>
    <alternativeName>
        <fullName evidence="17">Neurotoxin Nv1-15</fullName>
    </alternativeName>
    <alternativeName>
        <fullName evidence="10 18">Neurotoxin Nv1-17</fullName>
    </alternativeName>
    <alternativeName>
        <fullName evidence="10 19">Neurotoxin Nv1-18</fullName>
    </alternativeName>
    <alternativeName>
        <fullName evidence="10 20">Neurotoxin Nv1-19</fullName>
    </alternativeName>
    <alternativeName>
        <fullName evidence="12">Neurotoxin Nv1-2</fullName>
    </alternativeName>
    <alternativeName>
        <fullName evidence="13">Neurotoxin Nv1-4</fullName>
    </alternativeName>
    <alternativeName>
        <fullName evidence="14">Neurotoxin Nv1-5</fullName>
    </alternativeName>
    <alternativeName>
        <fullName evidence="15">Neurotoxin Nv1-8</fullName>
    </alternativeName>
</protein>
<reference key="1">
    <citation type="journal article" date="2008" name="J. Mol. Biol.">
        <title>Intron retention as a posttranscriptional regulatory mechanism of neurotoxin expression at early life stages of the starlet anemone Nematostella vectensis.</title>
        <authorList>
            <person name="Moran Y."/>
            <person name="Weinberger H."/>
            <person name="Reitzel A.M."/>
            <person name="Sullivan J.C."/>
            <person name="Kahn R."/>
            <person name="Gordon D."/>
            <person name="Finnerty J.R."/>
            <person name="Gurevitz M."/>
        </authorList>
    </citation>
    <scope>NUCLEOTIDE SEQUENCE [MRNA]</scope>
    <scope>FUNCTION</scope>
    <scope>ALTERNATIVE SPLICING</scope>
    <scope>DEVELOPMENTAL STAGE</scope>
    <scope>TOXIC DOSE</scope>
    <source>
        <strain>Sippewissett Marsh</strain>
    </source>
</reference>
<reference key="2">
    <citation type="journal article" date="2008" name="Mol. Biol. Evol.">
        <title>Concerted evolution of sea anemone neurotoxin genes is revealed through analysis of the Nematostella vectensis genome.</title>
        <authorList>
            <person name="Moran Y."/>
            <person name="Weinberger H."/>
            <person name="Sullivan J.C."/>
            <person name="Reitzel A.M."/>
            <person name="Finnerty J.R."/>
            <person name="Gurevitz M."/>
        </authorList>
    </citation>
    <scope>NUCLEOTIDE SEQUENCE [GENOMIC DNA]</scope>
    <source>
        <strain>Crane Marsh</strain>
        <strain>Neponset River Marsh</strain>
        <strain>Sippewissett Marsh</strain>
    </source>
</reference>
<reference key="3">
    <citation type="journal article" date="2007" name="Science">
        <title>Sea anemone genome reveals ancestral eumetazoan gene repertoire and genomic organization.</title>
        <authorList>
            <person name="Putnam N.H."/>
            <person name="Srivastava M."/>
            <person name="Hellsten U."/>
            <person name="Dirks B."/>
            <person name="Chapman J."/>
            <person name="Salamov A."/>
            <person name="Terry A."/>
            <person name="Shapiro H."/>
            <person name="Lindquist E."/>
            <person name="Kapitonov V.V."/>
            <person name="Jurka J."/>
            <person name="Genikhovich G."/>
            <person name="Grigoriev I.V."/>
            <person name="Lucas S.M."/>
            <person name="Steele R.E."/>
            <person name="Finnerty J.R."/>
            <person name="Technau U."/>
            <person name="Martindale M.Q."/>
            <person name="Rokhsar D.S."/>
        </authorList>
    </citation>
    <scope>NUCLEOTIDE SEQUENCE [LARGE SCALE GENOMIC DNA]</scope>
    <source>
        <strain>CH2 X CH6</strain>
    </source>
</reference>
<reference key="4">
    <citation type="journal article" date="2012" name="Proc. R. Soc. B">
        <title>Neurotoxin localization to ectodermal gland cells uncovers an alternative mechanism of venom delivery in sea anemones.</title>
        <authorList>
            <person name="Moran Y."/>
            <person name="Genikhovich G."/>
            <person name="Gordon D."/>
            <person name="Wienkoop S."/>
            <person name="Zenkert C."/>
            <person name="Ozbek S."/>
            <person name="Technau U."/>
            <person name="Gurevitz M."/>
        </authorList>
    </citation>
    <scope>FUNCTION</scope>
    <scope>TISSUE SPECIFICITY</scope>
    <scope>DEVELOPMENTAL STAGE</scope>
</reference>
<reference key="5">
    <citation type="journal article" date="2012" name="Toxicon">
        <title>Development of a rational nomenclature for naming peptide and protein toxins from sea anemones.</title>
        <authorList>
            <person name="Oliveira J.S."/>
            <person name="Fuentes-Silva D."/>
            <person name="King G.F."/>
        </authorList>
    </citation>
    <scope>NOMENCLATURE</scope>
</reference>
<reference key="6">
    <citation type="journal article" date="2018" name="Elife">
        <title>Dynamics of venom composition across a complex life cycle.</title>
        <authorList>
            <person name="Columbus-Shenkar Y.Y."/>
            <person name="Sachkova M.Y."/>
            <person name="Macrander J."/>
            <person name="Fridrich A."/>
            <person name="Modepalli V."/>
            <person name="Reitzel A.M."/>
            <person name="Sunagar K."/>
            <person name="Moran Y."/>
        </authorList>
    </citation>
    <scope>FUNCTION</scope>
    <scope>DEVELOPMENTAL STAGE</scope>
</reference>
<reference key="7">
    <citation type="journal article" date="2019" name="Mol. Biol. Evol.">
        <title>The birth and death of toxins with distinct functions: a case study in the sea anemone Nematostella.</title>
        <authorList>
            <person name="Sachkova M.Y."/>
            <person name="Singer S.A."/>
            <person name="Macrander J."/>
            <person name="Reitzel A.M."/>
            <person name="Peigneur S."/>
            <person name="Tytgat J."/>
            <person name="Moran Y."/>
        </authorList>
    </citation>
    <scope>FUNCTION</scope>
    <scope>IDENTIFICATION BY MASS SPECTROMETRY</scope>
    <scope>DEVELOPMENTAL STAGE</scope>
</reference>
<evidence type="ECO:0000250" key="1">
    <source>
        <dbReference type="UniProtKB" id="P19651"/>
    </source>
</evidence>
<evidence type="ECO:0000255" key="2"/>
<evidence type="ECO:0000269" key="3">
    <source>
    </source>
</evidence>
<evidence type="ECO:0000269" key="4">
    <source>
    </source>
</evidence>
<evidence type="ECO:0000269" key="5">
    <source>
    </source>
</evidence>
<evidence type="ECO:0000269" key="6">
    <source>
    </source>
</evidence>
<evidence type="ECO:0000303" key="7">
    <source>
    </source>
</evidence>
<evidence type="ECO:0000303" key="8">
    <source>
    </source>
</evidence>
<evidence type="ECO:0000303" key="9">
    <source>
    </source>
</evidence>
<evidence type="ECO:0000305" key="10"/>
<evidence type="ECO:0000305" key="11">
    <source>
    </source>
</evidence>
<evidence type="ECO:0000312" key="12">
    <source>
        <dbReference type="EMBL" id="ABW97332.1"/>
    </source>
</evidence>
<evidence type="ECO:0000312" key="13">
    <source>
        <dbReference type="EMBL" id="ABW97334.1"/>
    </source>
</evidence>
<evidence type="ECO:0000312" key="14">
    <source>
        <dbReference type="EMBL" id="ABW97335.1"/>
    </source>
</evidence>
<evidence type="ECO:0000312" key="15">
    <source>
        <dbReference type="EMBL" id="ABW97338.1"/>
    </source>
</evidence>
<evidence type="ECO:0000312" key="16">
    <source>
        <dbReference type="EMBL" id="ABW97343.1"/>
    </source>
</evidence>
<evidence type="ECO:0000312" key="17">
    <source>
        <dbReference type="EMBL" id="ABW97345.1"/>
    </source>
</evidence>
<evidence type="ECO:0000312" key="18">
    <source>
        <dbReference type="EMBL" id="ACB71118.1"/>
    </source>
</evidence>
<evidence type="ECO:0000312" key="19">
    <source>
        <dbReference type="EMBL" id="ACB71119.1"/>
    </source>
</evidence>
<evidence type="ECO:0000312" key="20">
    <source>
        <dbReference type="EMBL" id="ACB71120.1"/>
    </source>
</evidence>
<sequence length="85" mass="9268">MASFKIVIVCLALLVAVACARRRDMMSDDELDFHLSKRGIPCACDSDGPDIRSASLSGIVWMGSCPSGWKKCKSYYSIVADCCNQ</sequence>
<organism>
    <name type="scientific">Nematostella vectensis</name>
    <name type="common">Starlet sea anemone</name>
    <dbReference type="NCBI Taxonomy" id="45351"/>
    <lineage>
        <taxon>Eukaryota</taxon>
        <taxon>Metazoa</taxon>
        <taxon>Cnidaria</taxon>
        <taxon>Anthozoa</taxon>
        <taxon>Hexacorallia</taxon>
        <taxon>Actiniaria</taxon>
        <taxon>Edwardsiidae</taxon>
        <taxon>Nematostella</taxon>
    </lineage>
</organism>